<keyword id="KW-0007">Acetylation</keyword>
<keyword id="KW-0963">Cytoplasm</keyword>
<keyword id="KW-0396">Initiation factor</keyword>
<keyword id="KW-0597">Phosphoprotein</keyword>
<keyword id="KW-0648">Protein biosynthesis</keyword>
<keyword id="KW-1185">Reference proteome</keyword>
<keyword id="KW-0694">RNA-binding</keyword>
<organism>
    <name type="scientific">Rattus norvegicus</name>
    <name type="common">Rat</name>
    <dbReference type="NCBI Taxonomy" id="10116"/>
    <lineage>
        <taxon>Eukaryota</taxon>
        <taxon>Metazoa</taxon>
        <taxon>Chordata</taxon>
        <taxon>Craniata</taxon>
        <taxon>Vertebrata</taxon>
        <taxon>Euteleostomi</taxon>
        <taxon>Mammalia</taxon>
        <taxon>Eutheria</taxon>
        <taxon>Euarchontoglires</taxon>
        <taxon>Glires</taxon>
        <taxon>Rodentia</taxon>
        <taxon>Myomorpha</taxon>
        <taxon>Muroidea</taxon>
        <taxon>Muridae</taxon>
        <taxon>Murinae</taxon>
        <taxon>Rattus</taxon>
    </lineage>
</organism>
<feature type="chain" id="PRO_0000364133" description="Eukaryotic translation initiation factor 3 subunit D">
    <location>
        <begin position="1"/>
        <end position="548"/>
    </location>
</feature>
<feature type="region of interest" description="RNA gate" evidence="1">
    <location>
        <begin position="285"/>
        <end position="299"/>
    </location>
</feature>
<feature type="region of interest" description="Disordered" evidence="5">
    <location>
        <begin position="523"/>
        <end position="548"/>
    </location>
</feature>
<feature type="compositionally biased region" description="Acidic residues" evidence="5">
    <location>
        <begin position="529"/>
        <end position="548"/>
    </location>
</feature>
<feature type="modified residue" description="N6-acetyllysine" evidence="3">
    <location>
        <position position="53"/>
    </location>
</feature>
<feature type="modified residue" description="Phosphoserine" evidence="2">
    <location>
        <position position="161"/>
    </location>
</feature>
<feature type="modified residue" description="Phosphoserine" evidence="6">
    <location>
        <position position="528"/>
    </location>
</feature>
<feature type="modified residue" description="Phosphoserine" evidence="6">
    <location>
        <position position="529"/>
    </location>
</feature>
<gene>
    <name type="primary">Eif3d</name>
    <name type="synonym">Eif3s7</name>
</gene>
<evidence type="ECO:0000250" key="1">
    <source>
        <dbReference type="UniProtKB" id="K7IM66"/>
    </source>
</evidence>
<evidence type="ECO:0000250" key="2">
    <source>
        <dbReference type="UniProtKB" id="O15371"/>
    </source>
</evidence>
<evidence type="ECO:0000250" key="3">
    <source>
        <dbReference type="UniProtKB" id="O70194"/>
    </source>
</evidence>
<evidence type="ECO:0000255" key="4">
    <source>
        <dbReference type="HAMAP-Rule" id="MF_03003"/>
    </source>
</evidence>
<evidence type="ECO:0000256" key="5">
    <source>
        <dbReference type="SAM" id="MobiDB-lite"/>
    </source>
</evidence>
<evidence type="ECO:0007744" key="6">
    <source>
    </source>
</evidence>
<accession>Q6AYK8</accession>
<dbReference type="EMBL" id="CH473950">
    <property type="protein sequence ID" value="EDM15894.1"/>
    <property type="molecule type" value="Genomic_DNA"/>
</dbReference>
<dbReference type="EMBL" id="BC079005">
    <property type="protein sequence ID" value="AAH79005.1"/>
    <property type="molecule type" value="mRNA"/>
</dbReference>
<dbReference type="RefSeq" id="NP_001004283.1">
    <property type="nucleotide sequence ID" value="NM_001004283.1"/>
</dbReference>
<dbReference type="RefSeq" id="XP_006242000.1">
    <property type="nucleotide sequence ID" value="XM_006241938.5"/>
</dbReference>
<dbReference type="SMR" id="Q6AYK8"/>
<dbReference type="BioGRID" id="263853">
    <property type="interactions" value="1"/>
</dbReference>
<dbReference type="FunCoup" id="Q6AYK8">
    <property type="interactions" value="4636"/>
</dbReference>
<dbReference type="IntAct" id="Q6AYK8">
    <property type="interactions" value="4"/>
</dbReference>
<dbReference type="STRING" id="10116.ENSRNOP00000032361"/>
<dbReference type="iPTMnet" id="Q6AYK8"/>
<dbReference type="PhosphoSitePlus" id="Q6AYK8"/>
<dbReference type="jPOST" id="Q6AYK8"/>
<dbReference type="PaxDb" id="10116-ENSRNOP00000032361"/>
<dbReference type="Ensembl" id="ENSRNOT00000029753.4">
    <property type="protein sequence ID" value="ENSRNOP00000032361.2"/>
    <property type="gene ID" value="ENSRNOG00000005804.7"/>
</dbReference>
<dbReference type="GeneID" id="362952"/>
<dbReference type="KEGG" id="rno:362952"/>
<dbReference type="UCSC" id="RGD:1303255">
    <property type="organism name" value="rat"/>
</dbReference>
<dbReference type="AGR" id="RGD:1303255"/>
<dbReference type="CTD" id="8664"/>
<dbReference type="RGD" id="1303255">
    <property type="gene designation" value="Eif3d"/>
</dbReference>
<dbReference type="eggNOG" id="KOG2479">
    <property type="taxonomic scope" value="Eukaryota"/>
</dbReference>
<dbReference type="GeneTree" id="ENSGT00390000002667"/>
<dbReference type="HOGENOM" id="CLU_024521_2_0_1"/>
<dbReference type="InParanoid" id="Q6AYK8"/>
<dbReference type="OMA" id="FMDKRDN"/>
<dbReference type="OrthoDB" id="16538at2759"/>
<dbReference type="PhylomeDB" id="Q6AYK8"/>
<dbReference type="TreeFam" id="TF101519"/>
<dbReference type="Reactome" id="R-RNO-156827">
    <property type="pathway name" value="L13a-mediated translational silencing of Ceruloplasmin expression"/>
</dbReference>
<dbReference type="Reactome" id="R-RNO-72649">
    <property type="pathway name" value="Translation initiation complex formation"/>
</dbReference>
<dbReference type="Reactome" id="R-RNO-72689">
    <property type="pathway name" value="Formation of a pool of free 40S subunits"/>
</dbReference>
<dbReference type="Reactome" id="R-RNO-72695">
    <property type="pathway name" value="Formation of the ternary complex, and subsequently, the 43S complex"/>
</dbReference>
<dbReference type="Reactome" id="R-RNO-72702">
    <property type="pathway name" value="Ribosomal scanning and start codon recognition"/>
</dbReference>
<dbReference type="PRO" id="PR:Q6AYK8"/>
<dbReference type="Proteomes" id="UP000002494">
    <property type="component" value="Chromosome 7"/>
</dbReference>
<dbReference type="Proteomes" id="UP000234681">
    <property type="component" value="Chromosome 7"/>
</dbReference>
<dbReference type="Bgee" id="ENSRNOG00000005804">
    <property type="expression patterns" value="Expressed in pancreas and 20 other cell types or tissues"/>
</dbReference>
<dbReference type="GO" id="GO:0016282">
    <property type="term" value="C:eukaryotic 43S preinitiation complex"/>
    <property type="evidence" value="ECO:0007669"/>
    <property type="project" value="UniProtKB-UniRule"/>
</dbReference>
<dbReference type="GO" id="GO:0033290">
    <property type="term" value="C:eukaryotic 48S preinitiation complex"/>
    <property type="evidence" value="ECO:0007669"/>
    <property type="project" value="UniProtKB-UniRule"/>
</dbReference>
<dbReference type="GO" id="GO:0005852">
    <property type="term" value="C:eukaryotic translation initiation factor 3 complex"/>
    <property type="evidence" value="ECO:0000250"/>
    <property type="project" value="UniProtKB"/>
</dbReference>
<dbReference type="GO" id="GO:0071541">
    <property type="term" value="C:eukaryotic translation initiation factor 3 complex, eIF3m"/>
    <property type="evidence" value="ECO:0000266"/>
    <property type="project" value="RGD"/>
</dbReference>
<dbReference type="GO" id="GO:0045202">
    <property type="term" value="C:synapse"/>
    <property type="evidence" value="ECO:0000266"/>
    <property type="project" value="RGD"/>
</dbReference>
<dbReference type="GO" id="GO:0098808">
    <property type="term" value="F:mRNA cap binding"/>
    <property type="evidence" value="ECO:0000250"/>
    <property type="project" value="UniProtKB"/>
</dbReference>
<dbReference type="GO" id="GO:0003723">
    <property type="term" value="F:RNA binding"/>
    <property type="evidence" value="ECO:0000250"/>
    <property type="project" value="UniProtKB"/>
</dbReference>
<dbReference type="GO" id="GO:0003743">
    <property type="term" value="F:translation initiation factor activity"/>
    <property type="evidence" value="ECO:0000318"/>
    <property type="project" value="GO_Central"/>
</dbReference>
<dbReference type="GO" id="GO:0002191">
    <property type="term" value="P:cap-dependent translational initiation"/>
    <property type="evidence" value="ECO:0000250"/>
    <property type="project" value="UniProtKB"/>
</dbReference>
<dbReference type="GO" id="GO:0001732">
    <property type="term" value="P:formation of cytoplasmic translation initiation complex"/>
    <property type="evidence" value="ECO:0000266"/>
    <property type="project" value="RGD"/>
</dbReference>
<dbReference type="GO" id="GO:0075522">
    <property type="term" value="P:IRES-dependent viral translational initiation"/>
    <property type="evidence" value="ECO:0000266"/>
    <property type="project" value="RGD"/>
</dbReference>
<dbReference type="GO" id="GO:0045727">
    <property type="term" value="P:positive regulation of translation"/>
    <property type="evidence" value="ECO:0000266"/>
    <property type="project" value="RGD"/>
</dbReference>
<dbReference type="GO" id="GO:0006413">
    <property type="term" value="P:translational initiation"/>
    <property type="evidence" value="ECO:0000250"/>
    <property type="project" value="UniProtKB"/>
</dbReference>
<dbReference type="GO" id="GO:0075525">
    <property type="term" value="P:viral translational termination-reinitiation"/>
    <property type="evidence" value="ECO:0000266"/>
    <property type="project" value="RGD"/>
</dbReference>
<dbReference type="HAMAP" id="MF_03003">
    <property type="entry name" value="eIF3d"/>
    <property type="match status" value="1"/>
</dbReference>
<dbReference type="InterPro" id="IPR007783">
    <property type="entry name" value="eIF3d"/>
</dbReference>
<dbReference type="PANTHER" id="PTHR12399">
    <property type="entry name" value="EUKARYOTIC TRANSLATION INITIATION FACTOR 3 SUBUNIT 7"/>
    <property type="match status" value="1"/>
</dbReference>
<dbReference type="PANTHER" id="PTHR12399:SF0">
    <property type="entry name" value="EUKARYOTIC TRANSLATION INITIATION FACTOR 3 SUBUNIT D"/>
    <property type="match status" value="1"/>
</dbReference>
<dbReference type="Pfam" id="PF05091">
    <property type="entry name" value="eIF-3_zeta"/>
    <property type="match status" value="1"/>
</dbReference>
<dbReference type="PIRSF" id="PIRSF016281">
    <property type="entry name" value="EIF-3_zeta"/>
    <property type="match status" value="1"/>
</dbReference>
<comment type="function">
    <text evidence="4">mRNA cap-binding component of the eukaryotic translation initiation factor 3 (eIF-3) complex, a complex required for several steps in the initiation of protein synthesis of a specialized repertoire of mRNAs. The eIF-3 complex associates with the 40S ribosome and facilitates the recruitment of eIF-1, eIF-1A, eIF-2:GTP:methionyl-tRNAi and eIF-5 to form the 43S pre-initiation complex (43S PIC). The eIF-3 complex stimulates mRNA recruitment to the 43S PIC and scanning of the mRNA for AUG recognition. The eIF-3 complex is also required for disassembly and recycling of post-termination ribosomal complexes and subsequently prevents premature joining of the 40S and 60S ribosomal subunits prior to initiation. The eIF-3 complex specifically targets and initiates translation of a subset of mRNAs involved in cell proliferation, including cell cycling, differentiation and apoptosis, and uses different modes of RNA stem-loop binding to exert either translational activation or repression. In the eIF-3 complex, EIF3D specifically recognizes and binds the 7-methylguanosine cap of a subset of mRNAs.</text>
</comment>
<comment type="subunit">
    <text evidence="4">Component of the eukaryotic translation initiation factor 3 (eIF-3) complex, which is composed of 13 subunits: EIF3A, EIF3B, EIF3C, EIF3D, EIF3E, EIF3F, EIF3G, EIF3H, EIF3I, EIF3J, EIF3K, EIF3L and EIF3M. The eIF-3 complex appears to include 3 stable modules: module A is composed of EIF3A, EIF3B, EIF3G and EIF3I; module B is composed of EIF3F, EIF3H, and EIF3M; and module C is composed of EIF3C, EIF3D, EIF3E, EIF3K and EIF3L. EIF3C of module C binds EIF3B of module A and EIF3H of module B, thereby linking the three modules. EIF3J is a labile subunit that binds to the eIF-3 complex via EIF3B. The eIF-3 complex interacts with RPS6KB1 under conditions of nutrient depletion. Mitogenic stimulation leads to binding and activation of a complex composed of MTOR and RPTOR, leading to phosphorylation and release of RPS6KB1 and binding of EIF4B to eIF-3.</text>
</comment>
<comment type="subcellular location">
    <subcellularLocation>
        <location evidence="4">Cytoplasm</location>
    </subcellularLocation>
</comment>
<comment type="domain">
    <text evidence="4">The RNA gate region regulates mRNA cap recognition to prevent promiscuous mRNA-binding before assembly of eif3d into the full eukaryotic translation initiation factor 3 (eIF-3) complex.</text>
</comment>
<comment type="similarity">
    <text evidence="4">Belongs to the eIF-3 subunit D family.</text>
</comment>
<reference key="1">
    <citation type="submission" date="2005-08" db="EMBL/GenBank/DDBJ databases">
        <authorList>
            <person name="Mural R.J."/>
            <person name="Adams M.D."/>
            <person name="Myers E.W."/>
            <person name="Smith H.O."/>
            <person name="Venter J.C."/>
        </authorList>
    </citation>
    <scope>NUCLEOTIDE SEQUENCE [LARGE SCALE GENOMIC DNA]</scope>
</reference>
<reference key="2">
    <citation type="journal article" date="2004" name="Genome Res.">
        <title>The status, quality, and expansion of the NIH full-length cDNA project: the Mammalian Gene Collection (MGC).</title>
        <authorList>
            <consortium name="The MGC Project Team"/>
        </authorList>
    </citation>
    <scope>NUCLEOTIDE SEQUENCE [LARGE SCALE MRNA]</scope>
    <source>
        <tissue>Testis</tissue>
    </source>
</reference>
<reference key="3">
    <citation type="journal article" date="2012" name="Nat. Commun.">
        <title>Quantitative maps of protein phosphorylation sites across 14 different rat organs and tissues.</title>
        <authorList>
            <person name="Lundby A."/>
            <person name="Secher A."/>
            <person name="Lage K."/>
            <person name="Nordsborg N.B."/>
            <person name="Dmytriyev A."/>
            <person name="Lundby C."/>
            <person name="Olsen J.V."/>
        </authorList>
    </citation>
    <scope>PHOSPHORYLATION [LARGE SCALE ANALYSIS] AT SER-528 AND SER-529</scope>
    <scope>IDENTIFICATION BY MASS SPECTROMETRY [LARGE SCALE ANALYSIS]</scope>
</reference>
<proteinExistence type="evidence at protein level"/>
<name>EIF3D_RAT</name>
<sequence>MAKFMTPVIQDNPSGWGPCAVPEQFRDMPYQPFSKGDRLGKVADWTGATYQDKRYTNKYSSQFGGGSQYAYFHEEDETSFQLVDTARTQKTAYQRNRMRFAQRNLRRDKDRRNMVQFNLQTLPKSAKQKERERIRLQKKFQKQFGVRQKWDQKSQKPRDSSVEVRSDWEVKEEMDFPQLMKMRYLEVSEPQDIECCGALEYYDKAFDRITTRSEKPLRSIKRIFHTVTTTDDPVIRKLAKTQGNVFATDAILATLMSCTRSVYSWDIVVQRVGSKLFFDKRDNSDFDLLTVSETANEPPQDEGNSFNSPRNLAMEATYINHNFSQQCLRMGRERYNFPNPNPFVEDDMDKNEIASVAYRYRRWKLGDDIDLIVRCEHDGVMTGANGEVSFINIKTLNEWDSRHCNGVDWRQKLDSQRGAVIATELKNNSYKLARWTCCALLAGSEYLKLGYVSRYHVKDSSRHVILGTQQFKPNEFASQINLSVENAWGILRCVIDICMKLEEGKYLILKDPNKQVIRVYSLPDGTFSSEEDEEDEEEEEEEEEEEET</sequence>
<protein>
    <recommendedName>
        <fullName evidence="4">Eukaryotic translation initiation factor 3 subunit D</fullName>
        <shortName evidence="4">eIF3d</shortName>
    </recommendedName>
    <alternativeName>
        <fullName evidence="4">Eukaryotic translation initiation factor 3 subunit 7</fullName>
    </alternativeName>
    <alternativeName>
        <fullName evidence="4">eIF-3-zeta</fullName>
    </alternativeName>
</protein>